<accession>Q5T1J5</accession>
<proteinExistence type="uncertain"/>
<evidence type="ECO:0000255" key="1"/>
<evidence type="ECO:0000255" key="2">
    <source>
        <dbReference type="PROSITE-ProRule" id="PRU01150"/>
    </source>
</evidence>
<evidence type="ECO:0000256" key="3">
    <source>
        <dbReference type="SAM" id="MobiDB-lite"/>
    </source>
</evidence>
<evidence type="ECO:0000305" key="4"/>
<name>CHCH9_HUMAN</name>
<reference key="1">
    <citation type="journal article" date="2004" name="Nature">
        <title>DNA sequence and analysis of human chromosome 9.</title>
        <authorList>
            <person name="Humphray S.J."/>
            <person name="Oliver K."/>
            <person name="Hunt A.R."/>
            <person name="Plumb R.W."/>
            <person name="Loveland J.E."/>
            <person name="Howe K.L."/>
            <person name="Andrews T.D."/>
            <person name="Searle S."/>
            <person name="Hunt S.E."/>
            <person name="Scott C.E."/>
            <person name="Jones M.C."/>
            <person name="Ainscough R."/>
            <person name="Almeida J.P."/>
            <person name="Ambrose K.D."/>
            <person name="Ashwell R.I.S."/>
            <person name="Babbage A.K."/>
            <person name="Babbage S."/>
            <person name="Bagguley C.L."/>
            <person name="Bailey J."/>
            <person name="Banerjee R."/>
            <person name="Barker D.J."/>
            <person name="Barlow K.F."/>
            <person name="Bates K."/>
            <person name="Beasley H."/>
            <person name="Beasley O."/>
            <person name="Bird C.P."/>
            <person name="Bray-Allen S."/>
            <person name="Brown A.J."/>
            <person name="Brown J.Y."/>
            <person name="Burford D."/>
            <person name="Burrill W."/>
            <person name="Burton J."/>
            <person name="Carder C."/>
            <person name="Carter N.P."/>
            <person name="Chapman J.C."/>
            <person name="Chen Y."/>
            <person name="Clarke G."/>
            <person name="Clark S.Y."/>
            <person name="Clee C.M."/>
            <person name="Clegg S."/>
            <person name="Collier R.E."/>
            <person name="Corby N."/>
            <person name="Crosier M."/>
            <person name="Cummings A.T."/>
            <person name="Davies J."/>
            <person name="Dhami P."/>
            <person name="Dunn M."/>
            <person name="Dutta I."/>
            <person name="Dyer L.W."/>
            <person name="Earthrowl M.E."/>
            <person name="Faulkner L."/>
            <person name="Fleming C.J."/>
            <person name="Frankish A."/>
            <person name="Frankland J.A."/>
            <person name="French L."/>
            <person name="Fricker D.G."/>
            <person name="Garner P."/>
            <person name="Garnett J."/>
            <person name="Ghori J."/>
            <person name="Gilbert J.G.R."/>
            <person name="Glison C."/>
            <person name="Grafham D.V."/>
            <person name="Gribble S."/>
            <person name="Griffiths C."/>
            <person name="Griffiths-Jones S."/>
            <person name="Grocock R."/>
            <person name="Guy J."/>
            <person name="Hall R.E."/>
            <person name="Hammond S."/>
            <person name="Harley J.L."/>
            <person name="Harrison E.S.I."/>
            <person name="Hart E.A."/>
            <person name="Heath P.D."/>
            <person name="Henderson C.D."/>
            <person name="Hopkins B.L."/>
            <person name="Howard P.J."/>
            <person name="Howden P.J."/>
            <person name="Huckle E."/>
            <person name="Johnson C."/>
            <person name="Johnson D."/>
            <person name="Joy A.A."/>
            <person name="Kay M."/>
            <person name="Keenan S."/>
            <person name="Kershaw J.K."/>
            <person name="Kimberley A.M."/>
            <person name="King A."/>
            <person name="Knights A."/>
            <person name="Laird G.K."/>
            <person name="Langford C."/>
            <person name="Lawlor S."/>
            <person name="Leongamornlert D.A."/>
            <person name="Leversha M."/>
            <person name="Lloyd C."/>
            <person name="Lloyd D.M."/>
            <person name="Lovell J."/>
            <person name="Martin S."/>
            <person name="Mashreghi-Mohammadi M."/>
            <person name="Matthews L."/>
            <person name="McLaren S."/>
            <person name="McLay K.E."/>
            <person name="McMurray A."/>
            <person name="Milne S."/>
            <person name="Nickerson T."/>
            <person name="Nisbett J."/>
            <person name="Nordsiek G."/>
            <person name="Pearce A.V."/>
            <person name="Peck A.I."/>
            <person name="Porter K.M."/>
            <person name="Pandian R."/>
            <person name="Pelan S."/>
            <person name="Phillimore B."/>
            <person name="Povey S."/>
            <person name="Ramsey Y."/>
            <person name="Rand V."/>
            <person name="Scharfe M."/>
            <person name="Sehra H.K."/>
            <person name="Shownkeen R."/>
            <person name="Sims S.K."/>
            <person name="Skuce C.D."/>
            <person name="Smith M."/>
            <person name="Steward C.A."/>
            <person name="Swarbreck D."/>
            <person name="Sycamore N."/>
            <person name="Tester J."/>
            <person name="Thorpe A."/>
            <person name="Tracey A."/>
            <person name="Tromans A."/>
            <person name="Thomas D.W."/>
            <person name="Wall M."/>
            <person name="Wallis J.M."/>
            <person name="West A.P."/>
            <person name="Whitehead S.L."/>
            <person name="Willey D.L."/>
            <person name="Williams S.A."/>
            <person name="Wilming L."/>
            <person name="Wray P.W."/>
            <person name="Young L."/>
            <person name="Ashurst J.L."/>
            <person name="Coulson A."/>
            <person name="Blocker H."/>
            <person name="Durbin R.M."/>
            <person name="Sulston J.E."/>
            <person name="Hubbard T."/>
            <person name="Jackson M.J."/>
            <person name="Bentley D.R."/>
            <person name="Beck S."/>
            <person name="Rogers J."/>
            <person name="Dunham I."/>
        </authorList>
    </citation>
    <scope>NUCLEOTIDE SEQUENCE [LARGE SCALE GENOMIC DNA]</scope>
</reference>
<protein>
    <recommendedName>
        <fullName>Putative coiled-coil-helix-coiled-coil-helix domain-containing protein CHCHD2P9, mitochondrial</fullName>
    </recommendedName>
    <alternativeName>
        <fullName>Coiled-coil-helix-coiled-coil-helix domain-containing 2 pseudogene 9</fullName>
    </alternativeName>
</protein>
<gene>
    <name type="primary">CHCHD2P9</name>
    <name type="synonym">C9orf49</name>
    <name type="synonym">CHCHD9</name>
</gene>
<feature type="transit peptide" description="Mitochondrion" evidence="1">
    <location>
        <begin position="1"/>
        <end position="9"/>
    </location>
</feature>
<feature type="chain" id="PRO_0000314910" description="Putative coiled-coil-helix-coiled-coil-helix domain-containing protein CHCHD2P9, mitochondrial">
    <location>
        <begin position="10"/>
        <end position="151"/>
    </location>
</feature>
<feature type="domain" description="CHCH" evidence="2">
    <location>
        <begin position="111"/>
        <end position="151"/>
    </location>
</feature>
<feature type="region of interest" description="Disordered" evidence="3">
    <location>
        <begin position="1"/>
        <end position="50"/>
    </location>
</feature>
<feature type="region of interest" description="Disordered" evidence="3">
    <location>
        <begin position="75"/>
        <end position="110"/>
    </location>
</feature>
<feature type="short sequence motif" description="Cx9C motif 1" evidence="2">
    <location>
        <begin position="114"/>
        <end position="124"/>
    </location>
</feature>
<feature type="short sequence motif" description="Cx9C motif 2" evidence="2">
    <location>
        <begin position="134"/>
        <end position="144"/>
    </location>
</feature>
<feature type="compositionally biased region" description="Low complexity" evidence="3">
    <location>
        <begin position="10"/>
        <end position="26"/>
    </location>
</feature>
<feature type="compositionally biased region" description="Pro residues" evidence="3">
    <location>
        <begin position="27"/>
        <end position="38"/>
    </location>
</feature>
<feature type="compositionally biased region" description="Low complexity" evidence="3">
    <location>
        <begin position="39"/>
        <end position="50"/>
    </location>
</feature>
<feature type="compositionally biased region" description="Low complexity" evidence="3">
    <location>
        <begin position="100"/>
        <end position="110"/>
    </location>
</feature>
<feature type="disulfide bond" evidence="2">
    <location>
        <begin position="114"/>
        <end position="144"/>
    </location>
</feature>
<feature type="disulfide bond" evidence="2">
    <location>
        <begin position="124"/>
        <end position="134"/>
    </location>
</feature>
<sequence>MPRGSRSRTSRMAPPASRAPQMRAAPRPAPVAQPPAAAPPSAVGSSAAAPRQPGLMAQMATTAAGVAVGSAVGHTQGHAVTGGFSGGSNAEPARPDIAYQEPQGTQPAQQQQPCFYGIKQFLECAQNQGDIKLCEDFSKVLKQCRLAKGLA</sequence>
<keyword id="KW-1015">Disulfide bond</keyword>
<keyword id="KW-0496">Mitochondrion</keyword>
<keyword id="KW-1185">Reference proteome</keyword>
<keyword id="KW-0809">Transit peptide</keyword>
<comment type="subcellular location">
    <subcellularLocation>
        <location evidence="4">Mitochondrion</location>
    </subcellularLocation>
</comment>
<comment type="caution">
    <text evidence="4">Could be the product of a pseudogene.</text>
</comment>
<organism>
    <name type="scientific">Homo sapiens</name>
    <name type="common">Human</name>
    <dbReference type="NCBI Taxonomy" id="9606"/>
    <lineage>
        <taxon>Eukaryota</taxon>
        <taxon>Metazoa</taxon>
        <taxon>Chordata</taxon>
        <taxon>Craniata</taxon>
        <taxon>Vertebrata</taxon>
        <taxon>Euteleostomi</taxon>
        <taxon>Mammalia</taxon>
        <taxon>Eutheria</taxon>
        <taxon>Euarchontoglires</taxon>
        <taxon>Primates</taxon>
        <taxon>Haplorrhini</taxon>
        <taxon>Catarrhini</taxon>
        <taxon>Hominidae</taxon>
        <taxon>Homo</taxon>
    </lineage>
</organism>
<dbReference type="EMBL" id="AL450243">
    <property type="status" value="NOT_ANNOTATED_CDS"/>
    <property type="molecule type" value="Genomic_DNA"/>
</dbReference>
<dbReference type="SMR" id="Q5T1J5"/>
<dbReference type="FunCoup" id="Q5T1J5">
    <property type="interactions" value="1140"/>
</dbReference>
<dbReference type="IntAct" id="Q5T1J5">
    <property type="interactions" value="20"/>
</dbReference>
<dbReference type="MINT" id="Q5T1J5"/>
<dbReference type="GlyGen" id="Q5T1J5">
    <property type="glycosylation" value="1 site, 1 O-linked glycan (1 site)"/>
</dbReference>
<dbReference type="iPTMnet" id="Q5T1J5"/>
<dbReference type="BioMuta" id="HGNC:23676"/>
<dbReference type="DMDM" id="74744476"/>
<dbReference type="jPOST" id="Q5T1J5"/>
<dbReference type="MassIVE" id="Q5T1J5"/>
<dbReference type="PeptideAtlas" id="Q5T1J5"/>
<dbReference type="Pumba" id="Q5T1J5"/>
<dbReference type="TopDownProteomics" id="Q5T1J5"/>
<dbReference type="AGR" id="HGNC:23676"/>
<dbReference type="GeneCards" id="CHCHD2P9"/>
<dbReference type="HGNC" id="HGNC:23676">
    <property type="gene designation" value="CHCHD2P9"/>
</dbReference>
<dbReference type="neXtProt" id="NX_Q5T1J5"/>
<dbReference type="InParanoid" id="Q5T1J5"/>
<dbReference type="PAN-GO" id="Q5T1J5">
    <property type="GO annotations" value="5 GO annotations based on evolutionary models"/>
</dbReference>
<dbReference type="PhylomeDB" id="Q5T1J5"/>
<dbReference type="PathwayCommons" id="Q5T1J5"/>
<dbReference type="SignaLink" id="Q5T1J5"/>
<dbReference type="ChiTaRS" id="CHCHD2P9">
    <property type="organism name" value="human"/>
</dbReference>
<dbReference type="Pharos" id="Q5T1J5">
    <property type="development level" value="Tdark"/>
</dbReference>
<dbReference type="Proteomes" id="UP000005640">
    <property type="component" value="Unplaced"/>
</dbReference>
<dbReference type="RNAct" id="Q5T1J5">
    <property type="molecule type" value="protein"/>
</dbReference>
<dbReference type="GO" id="GO:0005739">
    <property type="term" value="C:mitochondrion"/>
    <property type="evidence" value="ECO:0000318"/>
    <property type="project" value="GO_Central"/>
</dbReference>
<dbReference type="GO" id="GO:0005634">
    <property type="term" value="C:nucleus"/>
    <property type="evidence" value="ECO:0000318"/>
    <property type="project" value="GO_Central"/>
</dbReference>
<dbReference type="GO" id="GO:0043565">
    <property type="term" value="F:sequence-specific DNA binding"/>
    <property type="evidence" value="ECO:0000318"/>
    <property type="project" value="GO_Central"/>
</dbReference>
<dbReference type="GO" id="GO:0007005">
    <property type="term" value="P:mitochondrion organization"/>
    <property type="evidence" value="ECO:0000318"/>
    <property type="project" value="GO_Central"/>
</dbReference>
<dbReference type="GO" id="GO:0045944">
    <property type="term" value="P:positive regulation of transcription by RNA polymerase II"/>
    <property type="evidence" value="ECO:0000318"/>
    <property type="project" value="GO_Central"/>
</dbReference>
<dbReference type="InterPro" id="IPR055304">
    <property type="entry name" value="CHCHD2/10-like"/>
</dbReference>
<dbReference type="PANTHER" id="PTHR13523">
    <property type="entry name" value="COILED-COIL-HELIX-COILED-COIL-HELIX DOMAIN CONTAINING 2/NUR77"/>
    <property type="match status" value="1"/>
</dbReference>
<dbReference type="PANTHER" id="PTHR13523:SF3">
    <property type="entry name" value="COILED-COIL-HELIX-COILED-COIL-HELIX DOMAIN-CONTAINING PROTEIN 2-RELATED"/>
    <property type="match status" value="1"/>
</dbReference>
<dbReference type="PROSITE" id="PS51808">
    <property type="entry name" value="CHCH"/>
    <property type="match status" value="1"/>
</dbReference>